<sequence length="365" mass="41637">MSDEIVTNKSVTYVNNTTPVTITSSELDLRSCYQDDEVVIEVHAAALNPIDFITHQLCNSYIFGKYPKTYSRDYSGVIIKAGKDVDNRWKVGDKVNGMYSHIYGERGTLTHYLILNPAKDVPITHMVEVPKDENDPYDDFVYAAAWPLTFGTAFSTLYDFKKDWTSDSKVLVIGASTSVSYAFVHIAKNYFNIGTVVGICSKNSIERNKKLGYDYLVPYDEGSIVENVKKLKQSVLENDKFDMIFDSVGNHDFFPVIDQFLKPKAKNSFYVTIAGNNKADYKNISWRDFVSLSSILKAINPFKKYNWRFGHPYPPNNFIEVGNEMIKKGTYKPPIDSVYEFDQYKEAIDRLMSNRAKGKVVVKMK</sequence>
<proteinExistence type="evidence at protein level"/>
<dbReference type="EMBL" id="S55518">
    <property type="protein sequence ID" value="AAB19702.1"/>
    <property type="molecule type" value="Genomic_DNA"/>
</dbReference>
<dbReference type="EMBL" id="Z47071">
    <property type="protein sequence ID" value="CAA87367.1"/>
    <property type="molecule type" value="Genomic_DNA"/>
</dbReference>
<dbReference type="EMBL" id="Z49705">
    <property type="protein sequence ID" value="CAA89788.1"/>
    <property type="molecule type" value="Genomic_DNA"/>
</dbReference>
<dbReference type="EMBL" id="AY558419">
    <property type="protein sequence ID" value="AAS56745.1"/>
    <property type="molecule type" value="Genomic_DNA"/>
</dbReference>
<dbReference type="EMBL" id="BK006946">
    <property type="protein sequence ID" value="DAA10047.1"/>
    <property type="molecule type" value="Genomic_DNA"/>
</dbReference>
<dbReference type="PIR" id="S50409">
    <property type="entry name" value="S50409"/>
</dbReference>
<dbReference type="RefSeq" id="NP_013872.1">
    <property type="nucleotide sequence ID" value="NM_001182654.1"/>
</dbReference>
<dbReference type="SMR" id="P28625"/>
<dbReference type="BioGRID" id="35327">
    <property type="interactions" value="62"/>
</dbReference>
<dbReference type="DIP" id="DIP-4467N"/>
<dbReference type="FunCoup" id="P28625">
    <property type="interactions" value="192"/>
</dbReference>
<dbReference type="IntAct" id="P28625">
    <property type="interactions" value="3"/>
</dbReference>
<dbReference type="MINT" id="P28625"/>
<dbReference type="STRING" id="4932.YMR152W"/>
<dbReference type="iPTMnet" id="P28625"/>
<dbReference type="PaxDb" id="4932-YMR152W"/>
<dbReference type="PeptideAtlas" id="P28625"/>
<dbReference type="EnsemblFungi" id="YMR152W_mRNA">
    <property type="protein sequence ID" value="YMR152W"/>
    <property type="gene ID" value="YMR152W"/>
</dbReference>
<dbReference type="GeneID" id="855183"/>
<dbReference type="KEGG" id="sce:YMR152W"/>
<dbReference type="AGR" id="SGD:S000004760"/>
<dbReference type="SGD" id="S000004760">
    <property type="gene designation" value="YIM1"/>
</dbReference>
<dbReference type="VEuPathDB" id="FungiDB:YMR152W"/>
<dbReference type="eggNOG" id="KOG1198">
    <property type="taxonomic scope" value="Eukaryota"/>
</dbReference>
<dbReference type="GeneTree" id="ENSGT00880000138028"/>
<dbReference type="HOGENOM" id="CLU_026673_3_3_1"/>
<dbReference type="InParanoid" id="P28625"/>
<dbReference type="OMA" id="GPLTYFT"/>
<dbReference type="OrthoDB" id="3509362at2759"/>
<dbReference type="BioCyc" id="YEAST:G3O-32842-MONOMER"/>
<dbReference type="BioGRID-ORCS" id="855183">
    <property type="hits" value="0 hits in 10 CRISPR screens"/>
</dbReference>
<dbReference type="PRO" id="PR:P28625"/>
<dbReference type="Proteomes" id="UP000002311">
    <property type="component" value="Chromosome XIII"/>
</dbReference>
<dbReference type="RNAct" id="P28625">
    <property type="molecule type" value="protein"/>
</dbReference>
<dbReference type="GO" id="GO:0005737">
    <property type="term" value="C:cytoplasm"/>
    <property type="evidence" value="ECO:0007005"/>
    <property type="project" value="SGD"/>
</dbReference>
<dbReference type="GO" id="GO:0005783">
    <property type="term" value="C:endoplasmic reticulum"/>
    <property type="evidence" value="ECO:0007005"/>
    <property type="project" value="SGD"/>
</dbReference>
<dbReference type="GO" id="GO:0005811">
    <property type="term" value="C:lipid droplet"/>
    <property type="evidence" value="ECO:0000314"/>
    <property type="project" value="SGD"/>
</dbReference>
<dbReference type="GO" id="GO:0005739">
    <property type="term" value="C:mitochondrion"/>
    <property type="evidence" value="ECO:0007005"/>
    <property type="project" value="SGD"/>
</dbReference>
<dbReference type="GO" id="GO:0018455">
    <property type="term" value="F:alcohol dehydrogenase [NAD(P)+] activity"/>
    <property type="evidence" value="ECO:0000314"/>
    <property type="project" value="SGD"/>
</dbReference>
<dbReference type="GO" id="GO:0006974">
    <property type="term" value="P:DNA damage response"/>
    <property type="evidence" value="ECO:0000315"/>
    <property type="project" value="SGD"/>
</dbReference>
<dbReference type="CDD" id="cd08247">
    <property type="entry name" value="AST1_like"/>
    <property type="match status" value="1"/>
</dbReference>
<dbReference type="Gene3D" id="3.90.180.10">
    <property type="entry name" value="Medium-chain alcohol dehydrogenases, catalytic domain"/>
    <property type="match status" value="1"/>
</dbReference>
<dbReference type="Gene3D" id="3.40.50.720">
    <property type="entry name" value="NAD(P)-binding Rossmann-like Domain"/>
    <property type="match status" value="1"/>
</dbReference>
<dbReference type="InterPro" id="IPR013154">
    <property type="entry name" value="ADH-like_N"/>
</dbReference>
<dbReference type="InterPro" id="IPR011032">
    <property type="entry name" value="GroES-like_sf"/>
</dbReference>
<dbReference type="InterPro" id="IPR036291">
    <property type="entry name" value="NAD(P)-bd_dom_sf"/>
</dbReference>
<dbReference type="InterPro" id="IPR050700">
    <property type="entry name" value="YIM1/Zinc_Alcohol_DH_Fams"/>
</dbReference>
<dbReference type="PANTHER" id="PTHR11695">
    <property type="entry name" value="ALCOHOL DEHYDROGENASE RELATED"/>
    <property type="match status" value="1"/>
</dbReference>
<dbReference type="PANTHER" id="PTHR11695:SF294">
    <property type="entry name" value="RETICULON-4-INTERACTING PROTEIN 1, MITOCHONDRIAL"/>
    <property type="match status" value="1"/>
</dbReference>
<dbReference type="Pfam" id="PF08240">
    <property type="entry name" value="ADH_N"/>
    <property type="match status" value="1"/>
</dbReference>
<dbReference type="Pfam" id="PF13602">
    <property type="entry name" value="ADH_zinc_N_2"/>
    <property type="match status" value="1"/>
</dbReference>
<dbReference type="SUPFAM" id="SSF50129">
    <property type="entry name" value="GroES-like"/>
    <property type="match status" value="1"/>
</dbReference>
<dbReference type="SUPFAM" id="SSF51735">
    <property type="entry name" value="NAD(P)-binding Rossmann-fold domains"/>
    <property type="match status" value="1"/>
</dbReference>
<protein>
    <recommendedName>
        <fullName>Protein YIM1</fullName>
    </recommendedName>
</protein>
<organism>
    <name type="scientific">Saccharomyces cerevisiae (strain ATCC 204508 / S288c)</name>
    <name type="common">Baker's yeast</name>
    <dbReference type="NCBI Taxonomy" id="559292"/>
    <lineage>
        <taxon>Eukaryota</taxon>
        <taxon>Fungi</taxon>
        <taxon>Dikarya</taxon>
        <taxon>Ascomycota</taxon>
        <taxon>Saccharomycotina</taxon>
        <taxon>Saccharomycetes</taxon>
        <taxon>Saccharomycetales</taxon>
        <taxon>Saccharomycetaceae</taxon>
        <taxon>Saccharomyces</taxon>
    </lineage>
</organism>
<keyword id="KW-0551">Lipid droplet</keyword>
<keyword id="KW-0496">Mitochondrion</keyword>
<keyword id="KW-1185">Reference proteome</keyword>
<comment type="subcellular location">
    <subcellularLocation>
        <location>Lipid droplet</location>
    </subcellularLocation>
    <subcellularLocation>
        <location>Mitochondrion</location>
    </subcellularLocation>
</comment>
<comment type="disruption phenotype">
    <text evidence="1">Displays sensitivity to DNA damaging agents.</text>
</comment>
<comment type="miscellaneous">
    <text evidence="2">Present with 6540 molecules/cell in log phase SD medium.</text>
</comment>
<comment type="similarity">
    <text evidence="3">Belongs to the YIM1 family.</text>
</comment>
<accession>P28625</accession>
<accession>D6VZX3</accession>
<evidence type="ECO:0000269" key="1">
    <source>
    </source>
</evidence>
<evidence type="ECO:0000269" key="2">
    <source>
    </source>
</evidence>
<evidence type="ECO:0000305" key="3"/>
<feature type="chain" id="PRO_0000203310" description="Protein YIM1">
    <location>
        <begin position="1"/>
        <end position="365"/>
    </location>
</feature>
<feature type="sequence conflict" description="In Ref. 1; AAB19702." evidence="3" ref="1">
    <original>V</original>
    <variation>I</variation>
    <location>
        <position position="121"/>
    </location>
</feature>
<feature type="sequence conflict" description="In Ref. 1; AAB19702." evidence="3" ref="1">
    <original>S</original>
    <variation>I</variation>
    <location>
        <position position="234"/>
    </location>
</feature>
<feature type="sequence conflict" description="In Ref. 1; AAB19702." evidence="3" ref="1">
    <original>D</original>
    <variation>N</variation>
    <location>
        <position position="280"/>
    </location>
</feature>
<feature type="sequence conflict" description="In Ref. 1; AAB19702." evidence="3" ref="1">
    <original>L</original>
    <variation>S</variation>
    <location>
        <position position="296"/>
    </location>
</feature>
<name>YIM1_YEAST</name>
<gene>
    <name type="primary">YIM1</name>
    <name type="ordered locus">YMR152W</name>
    <name type="ORF">YM8520.01</name>
    <name type="ORF">YM9375.22</name>
</gene>
<reference key="1">
    <citation type="journal article" date="1991" name="Mol. Gen. Genet.">
        <title>Mitochondrial inner membrane protease 1 of Saccharomyces cerevisiae shows sequence similarity to the Escherichia coli leader peptidase.</title>
        <authorList>
            <person name="Behrens M."/>
            <person name="Michaelis G."/>
            <person name="Pratje E."/>
        </authorList>
    </citation>
    <scope>NUCLEOTIDE SEQUENCE [GENOMIC DNA]</scope>
</reference>
<reference key="2">
    <citation type="journal article" date="1997" name="Nature">
        <title>The nucleotide sequence of Saccharomyces cerevisiae chromosome XIII.</title>
        <authorList>
            <person name="Bowman S."/>
            <person name="Churcher C.M."/>
            <person name="Badcock K."/>
            <person name="Brown D."/>
            <person name="Chillingworth T."/>
            <person name="Connor R."/>
            <person name="Dedman K."/>
            <person name="Devlin K."/>
            <person name="Gentles S."/>
            <person name="Hamlin N."/>
            <person name="Hunt S."/>
            <person name="Jagels K."/>
            <person name="Lye G."/>
            <person name="Moule S."/>
            <person name="Odell C."/>
            <person name="Pearson D."/>
            <person name="Rajandream M.A."/>
            <person name="Rice P."/>
            <person name="Skelton J."/>
            <person name="Walsh S.V."/>
            <person name="Whitehead S."/>
            <person name="Barrell B.G."/>
        </authorList>
    </citation>
    <scope>NUCLEOTIDE SEQUENCE [LARGE SCALE GENOMIC DNA]</scope>
    <source>
        <strain>ATCC 204508 / S288c</strain>
    </source>
</reference>
<reference key="3">
    <citation type="journal article" date="2014" name="G3 (Bethesda)">
        <title>The reference genome sequence of Saccharomyces cerevisiae: Then and now.</title>
        <authorList>
            <person name="Engel S.R."/>
            <person name="Dietrich F.S."/>
            <person name="Fisk D.G."/>
            <person name="Binkley G."/>
            <person name="Balakrishnan R."/>
            <person name="Costanzo M.C."/>
            <person name="Dwight S.S."/>
            <person name="Hitz B.C."/>
            <person name="Karra K."/>
            <person name="Nash R.S."/>
            <person name="Weng S."/>
            <person name="Wong E.D."/>
            <person name="Lloyd P."/>
            <person name="Skrzypek M.S."/>
            <person name="Miyasato S.R."/>
            <person name="Simison M."/>
            <person name="Cherry J.M."/>
        </authorList>
    </citation>
    <scope>GENOME REANNOTATION</scope>
    <source>
        <strain>ATCC 204508 / S288c</strain>
    </source>
</reference>
<reference key="4">
    <citation type="journal article" date="2007" name="Genome Res.">
        <title>Approaching a complete repository of sequence-verified protein-encoding clones for Saccharomyces cerevisiae.</title>
        <authorList>
            <person name="Hu Y."/>
            <person name="Rolfs A."/>
            <person name="Bhullar B."/>
            <person name="Murthy T.V.S."/>
            <person name="Zhu C."/>
            <person name="Berger M.F."/>
            <person name="Camargo A.A."/>
            <person name="Kelley F."/>
            <person name="McCarron S."/>
            <person name="Jepson D."/>
            <person name="Richardson A."/>
            <person name="Raphael J."/>
            <person name="Moreira D."/>
            <person name="Taycher E."/>
            <person name="Zuo D."/>
            <person name="Mohr S."/>
            <person name="Kane M.F."/>
            <person name="Williamson J."/>
            <person name="Simpson A.J.G."/>
            <person name="Bulyk M.L."/>
            <person name="Harlow E."/>
            <person name="Marsischky G."/>
            <person name="Kolodner R.D."/>
            <person name="LaBaer J."/>
        </authorList>
    </citation>
    <scope>NUCLEOTIDE SEQUENCE [GENOMIC DNA]</scope>
    <source>
        <strain>ATCC 204508 / S288c</strain>
    </source>
</reference>
<reference key="5">
    <citation type="journal article" date="1999" name="J. Bacteriol.">
        <title>Identification and characterization of major lipid particle proteins of the yeast Saccharomyces cerevisiae.</title>
        <authorList>
            <person name="Athenstaedt K."/>
            <person name="Zweytick D."/>
            <person name="Jandrositz A."/>
            <person name="Kohlwein S.D."/>
            <person name="Daum G."/>
        </authorList>
    </citation>
    <scope>IDENTIFICATION BY MASS SPECTROMETRY</scope>
    <scope>SUBCELLULAR LOCATION</scope>
</reference>
<reference key="6">
    <citation type="journal article" date="2002" name="Proc. Natl. Acad. Sci. U.S.A.">
        <title>Transcriptional response of Saccharomyces cerevisiae to DNA-damaging agents does not identify the genes that protect against these agents.</title>
        <authorList>
            <person name="Birrell G.W."/>
            <person name="Brown J.A."/>
            <person name="Wu H.I."/>
            <person name="Giaever G."/>
            <person name="Chu A.M."/>
            <person name="Davis R.W."/>
            <person name="Brown J.M."/>
        </authorList>
    </citation>
    <scope>DISRUPTION PHENOTYPE</scope>
</reference>
<reference key="7">
    <citation type="journal article" date="2003" name="Nature">
        <title>Global analysis of protein expression in yeast.</title>
        <authorList>
            <person name="Ghaemmaghami S."/>
            <person name="Huh W.-K."/>
            <person name="Bower K."/>
            <person name="Howson R.W."/>
            <person name="Belle A."/>
            <person name="Dephoure N."/>
            <person name="O'Shea E.K."/>
            <person name="Weissman J.S."/>
        </authorList>
    </citation>
    <scope>LEVEL OF PROTEIN EXPRESSION [LARGE SCALE ANALYSIS]</scope>
</reference>
<reference key="8">
    <citation type="journal article" date="2003" name="Proc. Natl. Acad. Sci. U.S.A.">
        <title>The proteome of Saccharomyces cerevisiae mitochondria.</title>
        <authorList>
            <person name="Sickmann A."/>
            <person name="Reinders J."/>
            <person name="Wagner Y."/>
            <person name="Joppich C."/>
            <person name="Zahedi R.P."/>
            <person name="Meyer H.E."/>
            <person name="Schoenfisch B."/>
            <person name="Perschil I."/>
            <person name="Chacinska A."/>
            <person name="Guiard B."/>
            <person name="Rehling P."/>
            <person name="Pfanner N."/>
            <person name="Meisinger C."/>
        </authorList>
    </citation>
    <scope>SUBCELLULAR LOCATION [LARGE SCALE ANALYSIS]</scope>
    <source>
        <strain>ATCC 76625 / YPH499</strain>
    </source>
</reference>
<reference key="9">
    <citation type="journal article" date="2008" name="Mol. Cell. Proteomics">
        <title>A multidimensional chromatography technology for in-depth phosphoproteome analysis.</title>
        <authorList>
            <person name="Albuquerque C.P."/>
            <person name="Smolka M.B."/>
            <person name="Payne S.H."/>
            <person name="Bafna V."/>
            <person name="Eng J."/>
            <person name="Zhou H."/>
        </authorList>
    </citation>
    <scope>IDENTIFICATION BY MASS SPECTROMETRY [LARGE SCALE ANALYSIS]</scope>
</reference>